<proteinExistence type="inferred from homology"/>
<geneLocation type="chloroplast"/>
<organism>
    <name type="scientific">Pisum sativum</name>
    <name type="common">Garden pea</name>
    <name type="synonym">Lathyrus oleraceus</name>
    <dbReference type="NCBI Taxonomy" id="3888"/>
    <lineage>
        <taxon>Eukaryota</taxon>
        <taxon>Viridiplantae</taxon>
        <taxon>Streptophyta</taxon>
        <taxon>Embryophyta</taxon>
        <taxon>Tracheophyta</taxon>
        <taxon>Spermatophyta</taxon>
        <taxon>Magnoliopsida</taxon>
        <taxon>eudicotyledons</taxon>
        <taxon>Gunneridae</taxon>
        <taxon>Pentapetalae</taxon>
        <taxon>rosids</taxon>
        <taxon>fabids</taxon>
        <taxon>Fabales</taxon>
        <taxon>Fabaceae</taxon>
        <taxon>Papilionoideae</taxon>
        <taxon>50 kb inversion clade</taxon>
        <taxon>NPAAA clade</taxon>
        <taxon>Hologalegina</taxon>
        <taxon>IRL clade</taxon>
        <taxon>Fabeae</taxon>
        <taxon>Pisum</taxon>
    </lineage>
</organism>
<name>NU5C_PEA</name>
<gene>
    <name type="primary">ndhF</name>
    <name type="synonym">ndh5</name>
</gene>
<feature type="chain" id="PRO_0000118200" description="NAD(P)H-quinone oxidoreductase subunit 5, chloroplastic">
    <location>
        <begin position="1" status="less than"/>
        <end position="124" status="greater than"/>
    </location>
</feature>
<feature type="transmembrane region" description="Helical" evidence="2">
    <location>
        <begin position="22"/>
        <end position="42"/>
    </location>
</feature>
<feature type="transmembrane region" description="Helical" evidence="2">
    <location>
        <begin position="44"/>
        <end position="64"/>
    </location>
</feature>
<feature type="transmembrane region" description="Helical" evidence="2">
    <location>
        <begin position="91"/>
        <end position="111"/>
    </location>
</feature>
<feature type="non-terminal residue">
    <location>
        <position position="1"/>
    </location>
</feature>
<feature type="non-terminal residue">
    <location>
        <position position="124"/>
    </location>
</feature>
<dbReference type="EC" id="7.1.1.-"/>
<dbReference type="EMBL" id="M57479">
    <property type="protein sequence ID" value="AAA84546.1"/>
    <property type="molecule type" value="Genomic_DNA"/>
</dbReference>
<dbReference type="PIR" id="B48983">
    <property type="entry name" value="B48983"/>
</dbReference>
<dbReference type="SMR" id="Q32905"/>
<dbReference type="GO" id="GO:0009535">
    <property type="term" value="C:chloroplast thylakoid membrane"/>
    <property type="evidence" value="ECO:0007669"/>
    <property type="project" value="UniProtKB-SubCell"/>
</dbReference>
<dbReference type="GO" id="GO:0008137">
    <property type="term" value="F:NADH dehydrogenase (ubiquinone) activity"/>
    <property type="evidence" value="ECO:0007669"/>
    <property type="project" value="InterPro"/>
</dbReference>
<dbReference type="GO" id="GO:0048038">
    <property type="term" value="F:quinone binding"/>
    <property type="evidence" value="ECO:0007669"/>
    <property type="project" value="UniProtKB-KW"/>
</dbReference>
<dbReference type="GO" id="GO:0042773">
    <property type="term" value="P:ATP synthesis coupled electron transport"/>
    <property type="evidence" value="ECO:0007669"/>
    <property type="project" value="InterPro"/>
</dbReference>
<dbReference type="GO" id="GO:0015990">
    <property type="term" value="P:electron transport coupled proton transport"/>
    <property type="evidence" value="ECO:0007669"/>
    <property type="project" value="TreeGrafter"/>
</dbReference>
<dbReference type="InterPro" id="IPR001750">
    <property type="entry name" value="ND/Mrp_TM"/>
</dbReference>
<dbReference type="InterPro" id="IPR003945">
    <property type="entry name" value="NU5C-like"/>
</dbReference>
<dbReference type="PANTHER" id="PTHR42829">
    <property type="entry name" value="NADH-UBIQUINONE OXIDOREDUCTASE CHAIN 5"/>
    <property type="match status" value="1"/>
</dbReference>
<dbReference type="PANTHER" id="PTHR42829:SF2">
    <property type="entry name" value="NADH-UBIQUINONE OXIDOREDUCTASE CHAIN 5"/>
    <property type="match status" value="1"/>
</dbReference>
<dbReference type="Pfam" id="PF00361">
    <property type="entry name" value="Proton_antipo_M"/>
    <property type="match status" value="1"/>
</dbReference>
<dbReference type="PRINTS" id="PR01434">
    <property type="entry name" value="NADHDHGNASE5"/>
</dbReference>
<accession>Q32905</accession>
<reference key="1">
    <citation type="journal article" date="1992" name="Biochem. Genet.">
        <title>Both chloroplast and mitochondrial NADH dehydrogenase subunit 5 genes are transcribed in pea.</title>
        <authorList>
            <person name="Park J."/>
            <person name="Breitenberger C."/>
        </authorList>
    </citation>
    <scope>NUCLEOTIDE SEQUENCE [GENOMIC DNA]</scope>
    <source>
        <strain>cv. Rosakrone</strain>
    </source>
</reference>
<keyword id="KW-0150">Chloroplast</keyword>
<keyword id="KW-0472">Membrane</keyword>
<keyword id="KW-0520">NAD</keyword>
<keyword id="KW-0521">NADP</keyword>
<keyword id="KW-0934">Plastid</keyword>
<keyword id="KW-0618">Plastoquinone</keyword>
<keyword id="KW-0874">Quinone</keyword>
<keyword id="KW-0793">Thylakoid</keyword>
<keyword id="KW-1278">Translocase</keyword>
<keyword id="KW-0812">Transmembrane</keyword>
<keyword id="KW-1133">Transmembrane helix</keyword>
<keyword id="KW-0813">Transport</keyword>
<comment type="function">
    <text evidence="1">NDH shuttles electrons from NAD(P)H:plastoquinone, via FMN and iron-sulfur (Fe-S) centers, to quinones in the photosynthetic chain and possibly in a chloroplast respiratory chain. The immediate electron acceptor for the enzyme in this species is believed to be plastoquinone. Couples the redox reaction to proton translocation, and thus conserves the redox energy in a proton gradient (By similarity).</text>
</comment>
<comment type="catalytic activity">
    <reaction>
        <text>a plastoquinone + NADH + (n+1) H(+)(in) = a plastoquinol + NAD(+) + n H(+)(out)</text>
        <dbReference type="Rhea" id="RHEA:42608"/>
        <dbReference type="Rhea" id="RHEA-COMP:9561"/>
        <dbReference type="Rhea" id="RHEA-COMP:9562"/>
        <dbReference type="ChEBI" id="CHEBI:15378"/>
        <dbReference type="ChEBI" id="CHEBI:17757"/>
        <dbReference type="ChEBI" id="CHEBI:57540"/>
        <dbReference type="ChEBI" id="CHEBI:57945"/>
        <dbReference type="ChEBI" id="CHEBI:62192"/>
    </reaction>
</comment>
<comment type="catalytic activity">
    <reaction>
        <text>a plastoquinone + NADPH + (n+1) H(+)(in) = a plastoquinol + NADP(+) + n H(+)(out)</text>
        <dbReference type="Rhea" id="RHEA:42612"/>
        <dbReference type="Rhea" id="RHEA-COMP:9561"/>
        <dbReference type="Rhea" id="RHEA-COMP:9562"/>
        <dbReference type="ChEBI" id="CHEBI:15378"/>
        <dbReference type="ChEBI" id="CHEBI:17757"/>
        <dbReference type="ChEBI" id="CHEBI:57783"/>
        <dbReference type="ChEBI" id="CHEBI:58349"/>
        <dbReference type="ChEBI" id="CHEBI:62192"/>
    </reaction>
</comment>
<comment type="subunit">
    <text evidence="1">NDH is composed of at least 16 different subunits, 5 of which are encoded in the nucleus.</text>
</comment>
<comment type="subcellular location">
    <subcellularLocation>
        <location evidence="1">Plastid</location>
        <location evidence="1">Chloroplast thylakoid membrane</location>
        <topology evidence="1">Multi-pass membrane protein</topology>
    </subcellularLocation>
</comment>
<comment type="similarity">
    <text evidence="3">Belongs to the complex I subunit 5 family.</text>
</comment>
<evidence type="ECO:0000250" key="1"/>
<evidence type="ECO:0000255" key="2"/>
<evidence type="ECO:0000305" key="3"/>
<sequence>SVAKSAQFPLHVWLPDAMEGPTPISALIHAATMVAAGIFLVARLLPLFIVIPSIMTGIALIGIITVVLGATLAIAQKDIKKNLAYSTMSQLGYMMLALGMGSYRAALFHLITHAYSKALLFLGS</sequence>
<protein>
    <recommendedName>
        <fullName>NAD(P)H-quinone oxidoreductase subunit 5, chloroplastic</fullName>
        <ecNumber>7.1.1.-</ecNumber>
    </recommendedName>
    <alternativeName>
        <fullName>NAD(P)H dehydrogenase subunit 5</fullName>
    </alternativeName>
    <alternativeName>
        <fullName>NADH-plastoquinone oxidoreductase subunit 5</fullName>
    </alternativeName>
</protein>